<name>BXA4_BOMMO</name>
<proteinExistence type="inferred from homology"/>
<comment type="function">
    <text>Brain peptide responsible for activation of prothoracic glands to produce ecdysone in insects.</text>
</comment>
<comment type="subunit">
    <text>Heterodimer of a B chain and an A chain linked by two disulfide bonds.</text>
</comment>
<comment type="subcellular location">
    <subcellularLocation>
        <location>Secreted</location>
    </subcellularLocation>
</comment>
<comment type="miscellaneous">
    <text>Silk worm has two kinds of PTTH: 4K-PTTH and 22K-PTTH; there are many forms of 4K-PTTH.</text>
</comment>
<comment type="similarity">
    <text evidence="2">Belongs to the insulin family.</text>
</comment>
<organism>
    <name type="scientific">Bombyx mori</name>
    <name type="common">Silk moth</name>
    <dbReference type="NCBI Taxonomy" id="7091"/>
    <lineage>
        <taxon>Eukaryota</taxon>
        <taxon>Metazoa</taxon>
        <taxon>Ecdysozoa</taxon>
        <taxon>Arthropoda</taxon>
        <taxon>Hexapoda</taxon>
        <taxon>Insecta</taxon>
        <taxon>Pterygota</taxon>
        <taxon>Neoptera</taxon>
        <taxon>Endopterygota</taxon>
        <taxon>Lepidoptera</taxon>
        <taxon>Glossata</taxon>
        <taxon>Ditrysia</taxon>
        <taxon>Bombycoidea</taxon>
        <taxon>Bombycidae</taxon>
        <taxon>Bombycinae</taxon>
        <taxon>Bombyx</taxon>
    </lineage>
</organism>
<sequence>MKILLAIALMLSTVMWVSTQQPQGVHTYCGRHLARTLADLCWEAGVDKRSGAQFASYGSAWLMPYSEGRGKRGIVDECCLRPCSVDVLLSYC</sequence>
<keyword id="KW-0165">Cleavage on pair of basic residues</keyword>
<keyword id="KW-1015">Disulfide bond</keyword>
<keyword id="KW-0372">Hormone</keyword>
<keyword id="KW-0873">Pyrrolidone carboxylic acid</keyword>
<keyword id="KW-1185">Reference proteome</keyword>
<keyword id="KW-0964">Secreted</keyword>
<keyword id="KW-0732">Signal</keyword>
<feature type="signal peptide" evidence="1">
    <location>
        <begin position="1"/>
        <end position="19"/>
    </location>
</feature>
<feature type="peptide" id="PRO_0000015971" description="Bombyxin A-4 B chain">
    <location>
        <begin position="20"/>
        <end position="47"/>
    </location>
</feature>
<feature type="propeptide" id="PRO_0000015972" description="C peptide like">
    <location>
        <begin position="50"/>
        <end position="70"/>
    </location>
</feature>
<feature type="peptide" id="PRO_0000015973" description="Bombyxin A-4 A chain">
    <location>
        <begin position="73"/>
        <end position="92"/>
    </location>
</feature>
<feature type="modified residue" description="Pyrrolidone carboxylic acid" evidence="1">
    <location>
        <position position="20"/>
    </location>
</feature>
<feature type="disulfide bond" description="Interchain (between B and A chains)" evidence="1">
    <location>
        <begin position="29"/>
        <end position="79"/>
    </location>
</feature>
<feature type="disulfide bond" description="Interchain (between B and A chains)" evidence="1">
    <location>
        <begin position="41"/>
        <end position="92"/>
    </location>
</feature>
<feature type="disulfide bond" evidence="1">
    <location>
        <begin position="78"/>
        <end position="83"/>
    </location>
</feature>
<reference key="1">
    <citation type="journal article" date="1996" name="J. Mol. Biol.">
        <title>Multiple gene copies for bombyxin, an insulin-related peptide of the silkmoth Bombyx mori: structural signs for gene rearrangement and duplication responsible for generation of multiple molecular forms of bombyxin.</title>
        <authorList>
            <person name="Kondo H."/>
            <person name="Ino M."/>
            <person name="Suzuki A."/>
            <person name="Ishizaki H."/>
            <person name="Iwami M."/>
        </authorList>
    </citation>
    <scope>NUCLEOTIDE SEQUENCE [GENOMIC DNA]</scope>
</reference>
<evidence type="ECO:0000250" key="1"/>
<evidence type="ECO:0000305" key="2"/>
<dbReference type="EMBL" id="D00769">
    <property type="protein sequence ID" value="BAA00665.1"/>
    <property type="molecule type" value="Genomic_DNA"/>
</dbReference>
<dbReference type="PIR" id="S69477">
    <property type="entry name" value="S69477"/>
</dbReference>
<dbReference type="RefSeq" id="NP_001121607.1">
    <property type="nucleotide sequence ID" value="NM_001128135.1"/>
</dbReference>
<dbReference type="FunCoup" id="P26727">
    <property type="interactions" value="162"/>
</dbReference>
<dbReference type="STRING" id="7091.P26727"/>
<dbReference type="GeneID" id="100169657"/>
<dbReference type="KEGG" id="bmor:100169657"/>
<dbReference type="CTD" id="100169657"/>
<dbReference type="HOGENOM" id="CLU_125164_2_0_1"/>
<dbReference type="InParanoid" id="P26727"/>
<dbReference type="Proteomes" id="UP000005204">
    <property type="component" value="Unassembled WGS sequence"/>
</dbReference>
<dbReference type="GO" id="GO:0005615">
    <property type="term" value="C:extracellular space"/>
    <property type="evidence" value="ECO:0007669"/>
    <property type="project" value="InterPro"/>
</dbReference>
<dbReference type="GO" id="GO:0008083">
    <property type="term" value="F:growth factor activity"/>
    <property type="evidence" value="ECO:0007669"/>
    <property type="project" value="InterPro"/>
</dbReference>
<dbReference type="GO" id="GO:0005179">
    <property type="term" value="F:hormone activity"/>
    <property type="evidence" value="ECO:0007669"/>
    <property type="project" value="UniProtKB-KW"/>
</dbReference>
<dbReference type="CDD" id="cd04366">
    <property type="entry name" value="IlGF_insulin_bombyxin_like"/>
    <property type="match status" value="1"/>
</dbReference>
<dbReference type="Gene3D" id="1.10.100.10">
    <property type="entry name" value="Insulin-like"/>
    <property type="match status" value="1"/>
</dbReference>
<dbReference type="InterPro" id="IPR017097">
    <property type="entry name" value="Bombyxin"/>
</dbReference>
<dbReference type="InterPro" id="IPR030680">
    <property type="entry name" value="Bombyxin_A"/>
</dbReference>
<dbReference type="InterPro" id="IPR016179">
    <property type="entry name" value="Insulin-like"/>
</dbReference>
<dbReference type="InterPro" id="IPR036438">
    <property type="entry name" value="Insulin-like_sf"/>
</dbReference>
<dbReference type="InterPro" id="IPR022353">
    <property type="entry name" value="Insulin_CS"/>
</dbReference>
<dbReference type="InterPro" id="IPR022352">
    <property type="entry name" value="Insulin_family"/>
</dbReference>
<dbReference type="PANTHER" id="PTHR13647:SF4">
    <property type="entry name" value="INSULIN-LIKE PEPTIDE 1-RELATED"/>
    <property type="match status" value="1"/>
</dbReference>
<dbReference type="PANTHER" id="PTHR13647">
    <property type="entry name" value="INSULIN-LIKE PEPTIDE 2-RELATED"/>
    <property type="match status" value="1"/>
</dbReference>
<dbReference type="Pfam" id="PF00049">
    <property type="entry name" value="Insulin"/>
    <property type="match status" value="1"/>
</dbReference>
<dbReference type="PIRSF" id="PIRSF037038">
    <property type="entry name" value="Bombyxin"/>
    <property type="match status" value="1"/>
</dbReference>
<dbReference type="PIRSF" id="PIRSF500312">
    <property type="entry name" value="Bombyxin_A"/>
    <property type="match status" value="1"/>
</dbReference>
<dbReference type="PRINTS" id="PR02003">
    <property type="entry name" value="BOMBYXIN"/>
</dbReference>
<dbReference type="PRINTS" id="PR00276">
    <property type="entry name" value="INSULINFAMLY"/>
</dbReference>
<dbReference type="SMART" id="SM00078">
    <property type="entry name" value="IlGF"/>
    <property type="match status" value="1"/>
</dbReference>
<dbReference type="SUPFAM" id="SSF56994">
    <property type="entry name" value="Insulin-like"/>
    <property type="match status" value="1"/>
</dbReference>
<dbReference type="PROSITE" id="PS00262">
    <property type="entry name" value="INSULIN"/>
    <property type="match status" value="1"/>
</dbReference>
<protein>
    <recommendedName>
        <fullName>Bombyxin A-4</fullName>
        <shortName>BBX-A4</shortName>
    </recommendedName>
    <alternativeName>
        <fullName>4K-prothoracicotropic hormone</fullName>
        <shortName>4K-PTTH</shortName>
    </alternativeName>
    <component>
        <recommendedName>
            <fullName>Bombyxin A-4 B chain</fullName>
        </recommendedName>
    </component>
    <component>
        <recommendedName>
            <fullName>Bombyxin A-4 A chain</fullName>
        </recommendedName>
    </component>
</protein>
<accession>P26727</accession>
<gene>
    <name type="primary">BBXA4</name>
</gene>